<proteinExistence type="inferred from homology"/>
<dbReference type="EC" id="2.1.2.11" evidence="1"/>
<dbReference type="EMBL" id="CP000382">
    <property type="protein sequence ID" value="ABK60365.1"/>
    <property type="molecule type" value="Genomic_DNA"/>
</dbReference>
<dbReference type="RefSeq" id="WP_011721175.1">
    <property type="nucleotide sequence ID" value="NC_008593.1"/>
</dbReference>
<dbReference type="SMR" id="A0PXQ3"/>
<dbReference type="STRING" id="386415.NT01CX_1071"/>
<dbReference type="KEGG" id="cno:NT01CX_1071"/>
<dbReference type="eggNOG" id="COG0413">
    <property type="taxonomic scope" value="Bacteria"/>
</dbReference>
<dbReference type="HOGENOM" id="CLU_036645_1_0_9"/>
<dbReference type="UniPathway" id="UPA00028">
    <property type="reaction ID" value="UER00003"/>
</dbReference>
<dbReference type="Proteomes" id="UP000008220">
    <property type="component" value="Chromosome"/>
</dbReference>
<dbReference type="GO" id="GO:0005737">
    <property type="term" value="C:cytoplasm"/>
    <property type="evidence" value="ECO:0007669"/>
    <property type="project" value="UniProtKB-SubCell"/>
</dbReference>
<dbReference type="GO" id="GO:0003864">
    <property type="term" value="F:3-methyl-2-oxobutanoate hydroxymethyltransferase activity"/>
    <property type="evidence" value="ECO:0007669"/>
    <property type="project" value="UniProtKB-UniRule"/>
</dbReference>
<dbReference type="GO" id="GO:0000287">
    <property type="term" value="F:magnesium ion binding"/>
    <property type="evidence" value="ECO:0007669"/>
    <property type="project" value="TreeGrafter"/>
</dbReference>
<dbReference type="GO" id="GO:0015940">
    <property type="term" value="P:pantothenate biosynthetic process"/>
    <property type="evidence" value="ECO:0007669"/>
    <property type="project" value="UniProtKB-UniRule"/>
</dbReference>
<dbReference type="CDD" id="cd06557">
    <property type="entry name" value="KPHMT-like"/>
    <property type="match status" value="1"/>
</dbReference>
<dbReference type="FunFam" id="3.20.20.60:FF:000003">
    <property type="entry name" value="3-methyl-2-oxobutanoate hydroxymethyltransferase"/>
    <property type="match status" value="1"/>
</dbReference>
<dbReference type="Gene3D" id="3.20.20.60">
    <property type="entry name" value="Phosphoenolpyruvate-binding domains"/>
    <property type="match status" value="1"/>
</dbReference>
<dbReference type="HAMAP" id="MF_00156">
    <property type="entry name" value="PanB"/>
    <property type="match status" value="1"/>
</dbReference>
<dbReference type="InterPro" id="IPR003700">
    <property type="entry name" value="Pantoate_hydroxy_MeTrfase"/>
</dbReference>
<dbReference type="InterPro" id="IPR015813">
    <property type="entry name" value="Pyrv/PenolPyrv_kinase-like_dom"/>
</dbReference>
<dbReference type="InterPro" id="IPR040442">
    <property type="entry name" value="Pyrv_kinase-like_dom_sf"/>
</dbReference>
<dbReference type="NCBIfam" id="TIGR00222">
    <property type="entry name" value="panB"/>
    <property type="match status" value="1"/>
</dbReference>
<dbReference type="NCBIfam" id="NF001452">
    <property type="entry name" value="PRK00311.1"/>
    <property type="match status" value="1"/>
</dbReference>
<dbReference type="PANTHER" id="PTHR20881">
    <property type="entry name" value="3-METHYL-2-OXOBUTANOATE HYDROXYMETHYLTRANSFERASE"/>
    <property type="match status" value="1"/>
</dbReference>
<dbReference type="PANTHER" id="PTHR20881:SF0">
    <property type="entry name" value="3-METHYL-2-OXOBUTANOATE HYDROXYMETHYLTRANSFERASE"/>
    <property type="match status" value="1"/>
</dbReference>
<dbReference type="Pfam" id="PF02548">
    <property type="entry name" value="Pantoate_transf"/>
    <property type="match status" value="1"/>
</dbReference>
<dbReference type="PIRSF" id="PIRSF000388">
    <property type="entry name" value="Pantoate_hydroxy_MeTrfase"/>
    <property type="match status" value="1"/>
</dbReference>
<dbReference type="SUPFAM" id="SSF51621">
    <property type="entry name" value="Phosphoenolpyruvate/pyruvate domain"/>
    <property type="match status" value="1"/>
</dbReference>
<feature type="chain" id="PRO_0000297247" description="3-methyl-2-oxobutanoate hydroxymethyltransferase">
    <location>
        <begin position="1"/>
        <end position="275"/>
    </location>
</feature>
<feature type="active site" description="Proton acceptor" evidence="1">
    <location>
        <position position="182"/>
    </location>
</feature>
<feature type="binding site" evidence="1">
    <location>
        <begin position="44"/>
        <end position="45"/>
    </location>
    <ligand>
        <name>3-methyl-2-oxobutanoate</name>
        <dbReference type="ChEBI" id="CHEBI:11851"/>
    </ligand>
</feature>
<feature type="binding site" evidence="1">
    <location>
        <position position="44"/>
    </location>
    <ligand>
        <name>Mg(2+)</name>
        <dbReference type="ChEBI" id="CHEBI:18420"/>
    </ligand>
</feature>
<feature type="binding site" evidence="1">
    <location>
        <position position="83"/>
    </location>
    <ligand>
        <name>3-methyl-2-oxobutanoate</name>
        <dbReference type="ChEBI" id="CHEBI:11851"/>
    </ligand>
</feature>
<feature type="binding site" evidence="1">
    <location>
        <position position="83"/>
    </location>
    <ligand>
        <name>Mg(2+)</name>
        <dbReference type="ChEBI" id="CHEBI:18420"/>
    </ligand>
</feature>
<feature type="binding site" evidence="1">
    <location>
        <position position="113"/>
    </location>
    <ligand>
        <name>3-methyl-2-oxobutanoate</name>
        <dbReference type="ChEBI" id="CHEBI:11851"/>
    </ligand>
</feature>
<feature type="binding site" evidence="1">
    <location>
        <position position="115"/>
    </location>
    <ligand>
        <name>Mg(2+)</name>
        <dbReference type="ChEBI" id="CHEBI:18420"/>
    </ligand>
</feature>
<evidence type="ECO:0000255" key="1">
    <source>
        <dbReference type="HAMAP-Rule" id="MF_00156"/>
    </source>
</evidence>
<name>PANB_CLONN</name>
<sequence length="275" mass="29648">MKNTVTTFQKAKNNGEKLTMLTAYDYSTAKLIDESGINGILVGDSLGMVCLGYEDTLSVTMEDMIHHTRAVSRGVKNTLVVGDMPFMSYQSSVYDAVVNAGRLIKEGGATAVKLEGGATVIEQIKAIVNAQIPVMAHIGLTPQSINVFGGFKVQGKDEEKAQKLIEDAKKIEEAGAFAIVLECVPAKLAELITKAVSIPTIGIGAGAGCDGQILVYQDMLGMFSDMSPKFVKKFADVGELMKDGFKAYIKEVQEGTFPSKEHCFKIDESVLDKLY</sequence>
<comment type="function">
    <text evidence="1">Catalyzes the reversible reaction in which hydroxymethyl group from 5,10-methylenetetrahydrofolate is transferred onto alpha-ketoisovalerate to form ketopantoate.</text>
</comment>
<comment type="catalytic activity">
    <reaction evidence="1">
        <text>3-methyl-2-oxobutanoate + (6R)-5,10-methylene-5,6,7,8-tetrahydrofolate + H2O = 2-dehydropantoate + (6S)-5,6,7,8-tetrahydrofolate</text>
        <dbReference type="Rhea" id="RHEA:11824"/>
        <dbReference type="ChEBI" id="CHEBI:11561"/>
        <dbReference type="ChEBI" id="CHEBI:11851"/>
        <dbReference type="ChEBI" id="CHEBI:15377"/>
        <dbReference type="ChEBI" id="CHEBI:15636"/>
        <dbReference type="ChEBI" id="CHEBI:57453"/>
        <dbReference type="EC" id="2.1.2.11"/>
    </reaction>
</comment>
<comment type="cofactor">
    <cofactor evidence="1">
        <name>Mg(2+)</name>
        <dbReference type="ChEBI" id="CHEBI:18420"/>
    </cofactor>
    <text evidence="1">Binds 1 Mg(2+) ion per subunit.</text>
</comment>
<comment type="pathway">
    <text evidence="1">Cofactor biosynthesis; (R)-pantothenate biosynthesis; (R)-pantoate from 3-methyl-2-oxobutanoate: step 1/2.</text>
</comment>
<comment type="subunit">
    <text evidence="1">Homodecamer; pentamer of dimers.</text>
</comment>
<comment type="subcellular location">
    <subcellularLocation>
        <location evidence="1">Cytoplasm</location>
    </subcellularLocation>
</comment>
<comment type="similarity">
    <text evidence="1">Belongs to the PanB family.</text>
</comment>
<keyword id="KW-0963">Cytoplasm</keyword>
<keyword id="KW-0460">Magnesium</keyword>
<keyword id="KW-0479">Metal-binding</keyword>
<keyword id="KW-0566">Pantothenate biosynthesis</keyword>
<keyword id="KW-1185">Reference proteome</keyword>
<keyword id="KW-0808">Transferase</keyword>
<protein>
    <recommendedName>
        <fullName evidence="1">3-methyl-2-oxobutanoate hydroxymethyltransferase</fullName>
        <ecNumber evidence="1">2.1.2.11</ecNumber>
    </recommendedName>
    <alternativeName>
        <fullName evidence="1">Ketopantoate hydroxymethyltransferase</fullName>
        <shortName evidence="1">KPHMT</shortName>
    </alternativeName>
</protein>
<organism>
    <name type="scientific">Clostridium novyi (strain NT)</name>
    <dbReference type="NCBI Taxonomy" id="386415"/>
    <lineage>
        <taxon>Bacteria</taxon>
        <taxon>Bacillati</taxon>
        <taxon>Bacillota</taxon>
        <taxon>Clostridia</taxon>
        <taxon>Eubacteriales</taxon>
        <taxon>Clostridiaceae</taxon>
        <taxon>Clostridium</taxon>
    </lineage>
</organism>
<gene>
    <name evidence="1" type="primary">panB</name>
    <name type="ordered locus">NT01CX_1071</name>
</gene>
<reference key="1">
    <citation type="journal article" date="2006" name="Nat. Biotechnol.">
        <title>The genome and transcriptomes of the anti-tumor agent Clostridium novyi-NT.</title>
        <authorList>
            <person name="Bettegowda C."/>
            <person name="Huang X."/>
            <person name="Lin J."/>
            <person name="Cheong I."/>
            <person name="Kohli M."/>
            <person name="Szabo S.A."/>
            <person name="Zhang X."/>
            <person name="Diaz L.A. Jr."/>
            <person name="Velculescu V.E."/>
            <person name="Parmigiani G."/>
            <person name="Kinzler K.W."/>
            <person name="Vogelstein B."/>
            <person name="Zhou S."/>
        </authorList>
    </citation>
    <scope>NUCLEOTIDE SEQUENCE [LARGE SCALE GENOMIC DNA]</scope>
    <source>
        <strain>NT</strain>
    </source>
</reference>
<accession>A0PXQ3</accession>